<protein>
    <recommendedName>
        <fullName>Photosystem I reaction center subunit PsaK</fullName>
    </recommendedName>
    <alternativeName>
        <fullName>Light-harvesting 6.8 kDa polypeptide</fullName>
    </alternativeName>
    <alternativeName>
        <fullName>Photosystem I subunit X</fullName>
    </alternativeName>
</protein>
<dbReference type="EMBL" id="CP000117">
    <property type="protein sequence ID" value="ABA22060.1"/>
    <property type="molecule type" value="Genomic_DNA"/>
</dbReference>
<dbReference type="PIR" id="S16979">
    <property type="entry name" value="S16979"/>
</dbReference>
<dbReference type="SMR" id="P23317"/>
<dbReference type="STRING" id="240292.Ava_2445"/>
<dbReference type="KEGG" id="ava:Ava_2445"/>
<dbReference type="eggNOG" id="ENOG5032YIH">
    <property type="taxonomic scope" value="Bacteria"/>
</dbReference>
<dbReference type="HOGENOM" id="CLU_160496_1_0_3"/>
<dbReference type="Proteomes" id="UP000002533">
    <property type="component" value="Chromosome"/>
</dbReference>
<dbReference type="GO" id="GO:0009522">
    <property type="term" value="C:photosystem I"/>
    <property type="evidence" value="ECO:0007669"/>
    <property type="project" value="UniProtKB-KW"/>
</dbReference>
<dbReference type="GO" id="GO:0031676">
    <property type="term" value="C:plasma membrane-derived thylakoid membrane"/>
    <property type="evidence" value="ECO:0007669"/>
    <property type="project" value="UniProtKB-SubCell"/>
</dbReference>
<dbReference type="GO" id="GO:0015979">
    <property type="term" value="P:photosynthesis"/>
    <property type="evidence" value="ECO:0007669"/>
    <property type="project" value="UniProtKB-UniRule"/>
</dbReference>
<dbReference type="Gene3D" id="1.20.860.20">
    <property type="entry name" value="Photosystem I PsaK, reaction centre"/>
    <property type="match status" value="1"/>
</dbReference>
<dbReference type="HAMAP" id="MF_00474">
    <property type="entry name" value="PSI_PsaK"/>
    <property type="match status" value="1"/>
</dbReference>
<dbReference type="InterPro" id="IPR035982">
    <property type="entry name" value="PSI_centre_PsaK_sf"/>
</dbReference>
<dbReference type="InterPro" id="IPR000549">
    <property type="entry name" value="PSI_PsaG/PsaK"/>
</dbReference>
<dbReference type="InterPro" id="IPR017492">
    <property type="entry name" value="PSI_PsaK"/>
</dbReference>
<dbReference type="InterPro" id="IPR037101">
    <property type="entry name" value="PSI_PsaK_bact"/>
</dbReference>
<dbReference type="NCBIfam" id="TIGR03049">
    <property type="entry name" value="PS_I_psaK"/>
    <property type="match status" value="1"/>
</dbReference>
<dbReference type="Pfam" id="PF01241">
    <property type="entry name" value="PSI_PSAK"/>
    <property type="match status" value="1"/>
</dbReference>
<dbReference type="SUPFAM" id="SSF81563">
    <property type="entry name" value="Photosystem I reaction center subunit X, PsaK"/>
    <property type="match status" value="1"/>
</dbReference>
<name>PSAK_TRIV2</name>
<accession>P23317</accession>
<accession>Q3MAC6</accession>
<evidence type="ECO:0000255" key="1"/>
<evidence type="ECO:0000269" key="2">
    <source>
    </source>
</evidence>
<evidence type="ECO:0000305" key="3"/>
<keyword id="KW-0903">Direct protein sequencing</keyword>
<keyword id="KW-0472">Membrane</keyword>
<keyword id="KW-0602">Photosynthesis</keyword>
<keyword id="KW-0603">Photosystem I</keyword>
<keyword id="KW-0793">Thylakoid</keyword>
<keyword id="KW-0812">Transmembrane</keyword>
<keyword id="KW-1133">Transmembrane helix</keyword>
<comment type="subcellular location">
    <subcellularLocation>
        <location evidence="3">Cellular thylakoid membrane</location>
        <topology evidence="3">Multi-pass membrane protein</topology>
    </subcellularLocation>
</comment>
<comment type="similarity">
    <text evidence="3">Belongs to the PsaG/PsaK family.</text>
</comment>
<sequence>MLTSTLLAAATTPLEWSPTIGIIMVIANVIAITFGRQTIKYPSAEPALPSAKFFGGFGAPALLATTAFGHILGVGIILGLHNLGRF</sequence>
<proteinExistence type="evidence at protein level"/>
<gene>
    <name type="primary">psaK</name>
    <name type="ordered locus">Ava_2445</name>
</gene>
<feature type="propeptide" id="PRO_0000232409" evidence="2">
    <location>
        <begin position="1"/>
        <end position="8"/>
    </location>
</feature>
<feature type="chain" id="PRO_0000206217" description="Photosystem I reaction center subunit PsaK">
    <location>
        <begin position="9"/>
        <end position="86"/>
    </location>
</feature>
<feature type="transmembrane region" description="Helical" evidence="1">
    <location>
        <begin position="14"/>
        <end position="34"/>
    </location>
</feature>
<feature type="transmembrane region" description="Helical" evidence="1">
    <location>
        <begin position="60"/>
        <end position="80"/>
    </location>
</feature>
<organism>
    <name type="scientific">Trichormus variabilis (strain ATCC 29413 / PCC 7937)</name>
    <name type="common">Anabaena variabilis</name>
    <dbReference type="NCBI Taxonomy" id="240292"/>
    <lineage>
        <taxon>Bacteria</taxon>
        <taxon>Bacillati</taxon>
        <taxon>Cyanobacteriota</taxon>
        <taxon>Cyanophyceae</taxon>
        <taxon>Nostocales</taxon>
        <taxon>Nostocaceae</taxon>
        <taxon>Trichormus</taxon>
    </lineage>
</organism>
<reference key="1">
    <citation type="journal article" date="2014" name="Stand. Genomic Sci.">
        <title>Complete genome sequence of Anabaena variabilis ATCC 29413.</title>
        <authorList>
            <person name="Thiel T."/>
            <person name="Pratte B.S."/>
            <person name="Zhong J."/>
            <person name="Goodwin L."/>
            <person name="Copeland A."/>
            <person name="Lucas S."/>
            <person name="Han C."/>
            <person name="Pitluck S."/>
            <person name="Land M.L."/>
            <person name="Kyrpides N.C."/>
            <person name="Woyke T."/>
        </authorList>
    </citation>
    <scope>NUCLEOTIDE SEQUENCE [LARGE SCALE GENOMIC DNA]</scope>
    <source>
        <strain>ATCC 29413 / PCC 7937</strain>
    </source>
</reference>
<reference key="2">
    <citation type="journal article" date="1991" name="FEBS Lett.">
        <title>Identities of four low-molecular-mass subunits of the photosystem I complex from Anabaena variabilis ATCC 29413. Evidence for the presence of the psaI gene product in a cyanobacterial complex.</title>
        <authorList>
            <person name="Ikeuchi M."/>
            <person name="Nyhus K.J."/>
            <person name="Inoue Y."/>
            <person name="Pakrasi H.B."/>
        </authorList>
    </citation>
    <scope>PROTEIN SEQUENCE OF 9-39</scope>
</reference>